<organism>
    <name type="scientific">Neisseria gonorrhoeae (strain ATCC 700825 / FA 1090)</name>
    <dbReference type="NCBI Taxonomy" id="242231"/>
    <lineage>
        <taxon>Bacteria</taxon>
        <taxon>Pseudomonadati</taxon>
        <taxon>Pseudomonadota</taxon>
        <taxon>Betaproteobacteria</taxon>
        <taxon>Neisseriales</taxon>
        <taxon>Neisseriaceae</taxon>
        <taxon>Neisseria</taxon>
    </lineage>
</organism>
<protein>
    <recommendedName>
        <fullName evidence="1">Thiazole synthase</fullName>
        <ecNumber evidence="1">2.8.1.10</ecNumber>
    </recommendedName>
</protein>
<reference key="1">
    <citation type="submission" date="2003-03" db="EMBL/GenBank/DDBJ databases">
        <title>The complete genome sequence of Neisseria gonorrhoeae.</title>
        <authorList>
            <person name="Lewis L.A."/>
            <person name="Gillaspy A.F."/>
            <person name="McLaughlin R.E."/>
            <person name="Gipson M."/>
            <person name="Ducey T.F."/>
            <person name="Ownbey T."/>
            <person name="Hartman K."/>
            <person name="Nydick C."/>
            <person name="Carson M.B."/>
            <person name="Vaughn J."/>
            <person name="Thomson C."/>
            <person name="Song L."/>
            <person name="Lin S."/>
            <person name="Yuan X."/>
            <person name="Najar F."/>
            <person name="Zhan M."/>
            <person name="Ren Q."/>
            <person name="Zhu H."/>
            <person name="Qi S."/>
            <person name="Kenton S.M."/>
            <person name="Lai H."/>
            <person name="White J.D."/>
            <person name="Clifton S."/>
            <person name="Roe B.A."/>
            <person name="Dyer D.W."/>
        </authorList>
    </citation>
    <scope>NUCLEOTIDE SEQUENCE [LARGE SCALE GENOMIC DNA]</scope>
    <source>
        <strain>ATCC 700825 / FA 1090</strain>
    </source>
</reference>
<dbReference type="EC" id="2.8.1.10" evidence="1"/>
<dbReference type="EMBL" id="AE004969">
    <property type="protein sequence ID" value="AAW90613.1"/>
    <property type="molecule type" value="Genomic_DNA"/>
</dbReference>
<dbReference type="RefSeq" id="WP_003692011.1">
    <property type="nucleotide sequence ID" value="NC_002946.2"/>
</dbReference>
<dbReference type="RefSeq" id="YP_209025.1">
    <property type="nucleotide sequence ID" value="NC_002946.2"/>
</dbReference>
<dbReference type="SMR" id="Q5F5C4"/>
<dbReference type="STRING" id="242231.NGO_2005"/>
<dbReference type="KEGG" id="ngo:NGO_2005"/>
<dbReference type="PATRIC" id="fig|242231.10.peg.2417"/>
<dbReference type="HOGENOM" id="CLU_062233_1_0_4"/>
<dbReference type="UniPathway" id="UPA00060"/>
<dbReference type="Proteomes" id="UP000000535">
    <property type="component" value="Chromosome"/>
</dbReference>
<dbReference type="GO" id="GO:0005737">
    <property type="term" value="C:cytoplasm"/>
    <property type="evidence" value="ECO:0007669"/>
    <property type="project" value="UniProtKB-SubCell"/>
</dbReference>
<dbReference type="GO" id="GO:1990107">
    <property type="term" value="F:thiazole synthase activity"/>
    <property type="evidence" value="ECO:0007669"/>
    <property type="project" value="UniProtKB-EC"/>
</dbReference>
<dbReference type="GO" id="GO:0009229">
    <property type="term" value="P:thiamine diphosphate biosynthetic process"/>
    <property type="evidence" value="ECO:0007669"/>
    <property type="project" value="UniProtKB-UniRule"/>
</dbReference>
<dbReference type="CDD" id="cd04728">
    <property type="entry name" value="ThiG"/>
    <property type="match status" value="1"/>
</dbReference>
<dbReference type="Gene3D" id="3.20.20.70">
    <property type="entry name" value="Aldolase class I"/>
    <property type="match status" value="1"/>
</dbReference>
<dbReference type="HAMAP" id="MF_00443">
    <property type="entry name" value="ThiG"/>
    <property type="match status" value="1"/>
</dbReference>
<dbReference type="InterPro" id="IPR013785">
    <property type="entry name" value="Aldolase_TIM"/>
</dbReference>
<dbReference type="InterPro" id="IPR033983">
    <property type="entry name" value="Thiazole_synthase_ThiG"/>
</dbReference>
<dbReference type="InterPro" id="IPR008867">
    <property type="entry name" value="ThiG"/>
</dbReference>
<dbReference type="PANTHER" id="PTHR34266">
    <property type="entry name" value="THIAZOLE SYNTHASE"/>
    <property type="match status" value="1"/>
</dbReference>
<dbReference type="PANTHER" id="PTHR34266:SF2">
    <property type="entry name" value="THIAZOLE SYNTHASE"/>
    <property type="match status" value="1"/>
</dbReference>
<dbReference type="Pfam" id="PF05690">
    <property type="entry name" value="ThiG"/>
    <property type="match status" value="1"/>
</dbReference>
<dbReference type="SUPFAM" id="SSF110399">
    <property type="entry name" value="ThiG-like"/>
    <property type="match status" value="1"/>
</dbReference>
<accession>Q5F5C4</accession>
<sequence length="262" mass="28169">MLTLYGETFPSRLLLGTAAYPTPEILKQSVRTARPAMITVSLRRTGCGGEAHGQGFWSLLQETGVPVLPNTAGCQSVQEAVTTAQMAREVFETDWIKLELIGDDDTLQPDVFQLVEAAEILIKDGFKVLPYCTEDLIACRRLLDAGCQALMPWAAPIGTGLGAVHAYALKILRERLPDTPLIIDAGLGLPSQAAQVMEWGFDGVLLNTAVSRSGDPVNMARAFALAVESGRLAFEAGPVEARTKAQASTPTVGQPFWHSAEY</sequence>
<name>THIG_NEIG1</name>
<gene>
    <name evidence="1" type="primary">thiG</name>
    <name type="ordered locus">NGO_2005</name>
</gene>
<feature type="chain" id="PRO_0000162833" description="Thiazole synthase">
    <location>
        <begin position="1"/>
        <end position="262"/>
    </location>
</feature>
<feature type="active site" description="Schiff-base intermediate with DXP" evidence="1">
    <location>
        <position position="97"/>
    </location>
</feature>
<feature type="binding site" evidence="1">
    <location>
        <position position="158"/>
    </location>
    <ligand>
        <name>1-deoxy-D-xylulose 5-phosphate</name>
        <dbReference type="ChEBI" id="CHEBI:57792"/>
    </ligand>
</feature>
<feature type="binding site" evidence="1">
    <location>
        <begin position="185"/>
        <end position="186"/>
    </location>
    <ligand>
        <name>1-deoxy-D-xylulose 5-phosphate</name>
        <dbReference type="ChEBI" id="CHEBI:57792"/>
    </ligand>
</feature>
<feature type="binding site" evidence="1">
    <location>
        <begin position="207"/>
        <end position="208"/>
    </location>
    <ligand>
        <name>1-deoxy-D-xylulose 5-phosphate</name>
        <dbReference type="ChEBI" id="CHEBI:57792"/>
    </ligand>
</feature>
<keyword id="KW-0963">Cytoplasm</keyword>
<keyword id="KW-1185">Reference proteome</keyword>
<keyword id="KW-0704">Schiff base</keyword>
<keyword id="KW-0784">Thiamine biosynthesis</keyword>
<keyword id="KW-0808">Transferase</keyword>
<evidence type="ECO:0000255" key="1">
    <source>
        <dbReference type="HAMAP-Rule" id="MF_00443"/>
    </source>
</evidence>
<proteinExistence type="inferred from homology"/>
<comment type="function">
    <text evidence="1">Catalyzes the rearrangement of 1-deoxy-D-xylulose 5-phosphate (DXP) to produce the thiazole phosphate moiety of thiamine. Sulfur is provided by the thiocarboxylate moiety of the carrier protein ThiS. In vitro, sulfur can be provided by H(2)S.</text>
</comment>
<comment type="catalytic activity">
    <reaction evidence="1">
        <text>[ThiS sulfur-carrier protein]-C-terminal-Gly-aminoethanethioate + 2-iminoacetate + 1-deoxy-D-xylulose 5-phosphate = [ThiS sulfur-carrier protein]-C-terminal Gly-Gly + 2-[(2R,5Z)-2-carboxy-4-methylthiazol-5(2H)-ylidene]ethyl phosphate + 2 H2O + H(+)</text>
        <dbReference type="Rhea" id="RHEA:26297"/>
        <dbReference type="Rhea" id="RHEA-COMP:12909"/>
        <dbReference type="Rhea" id="RHEA-COMP:19908"/>
        <dbReference type="ChEBI" id="CHEBI:15377"/>
        <dbReference type="ChEBI" id="CHEBI:15378"/>
        <dbReference type="ChEBI" id="CHEBI:57792"/>
        <dbReference type="ChEBI" id="CHEBI:62899"/>
        <dbReference type="ChEBI" id="CHEBI:77846"/>
        <dbReference type="ChEBI" id="CHEBI:90778"/>
        <dbReference type="ChEBI" id="CHEBI:232372"/>
        <dbReference type="EC" id="2.8.1.10"/>
    </reaction>
</comment>
<comment type="pathway">
    <text evidence="1">Cofactor biosynthesis; thiamine diphosphate biosynthesis.</text>
</comment>
<comment type="subunit">
    <text evidence="1">Homotetramer. Forms heterodimers with either ThiH or ThiS.</text>
</comment>
<comment type="subcellular location">
    <subcellularLocation>
        <location evidence="1">Cytoplasm</location>
    </subcellularLocation>
</comment>
<comment type="similarity">
    <text evidence="1">Belongs to the ThiG family.</text>
</comment>